<accession>Q9TJ82</accession>
<comment type="function">
    <text evidence="1">Photosystem II (PSII) is a light-driven water:plastoquinone oxidoreductase that uses light energy to abstract electrons from H(2)O, generating O(2) and a proton gradient subsequently used for ATP formation. It consists of a core antenna complex that captures photons, and an electron transfer chain that converts photonic excitation into a charge separation. The D1/D2 (PsbA/PsbD) reaction center heterodimer binds P680, the primary electron donor of PSII as well as several subsequent electron acceptors.</text>
</comment>
<comment type="catalytic activity">
    <reaction evidence="1">
        <text>2 a plastoquinone + 4 hnu + 2 H2O = 2 a plastoquinol + O2</text>
        <dbReference type="Rhea" id="RHEA:36359"/>
        <dbReference type="Rhea" id="RHEA-COMP:9561"/>
        <dbReference type="Rhea" id="RHEA-COMP:9562"/>
        <dbReference type="ChEBI" id="CHEBI:15377"/>
        <dbReference type="ChEBI" id="CHEBI:15379"/>
        <dbReference type="ChEBI" id="CHEBI:17757"/>
        <dbReference type="ChEBI" id="CHEBI:30212"/>
        <dbReference type="ChEBI" id="CHEBI:62192"/>
        <dbReference type="EC" id="1.10.3.9"/>
    </reaction>
</comment>
<comment type="cofactor">
    <text evidence="1">The D1/D2 heterodimer binds P680, chlorophylls that are the primary electron donor of PSII, and subsequent electron acceptors. It shares a non-heme iron and each subunit binds pheophytin, quinone, additional chlorophylls, carotenoids and lipids. D1 provides most of the ligands for the Mn4-Ca-O5 cluster of the oxygen-evolving complex (OEC). There is also a Cl(-1) ion associated with D1 and D2, which is required for oxygen evolution. The PSII complex binds additional chlorophylls, carotenoids and specific lipids.</text>
</comment>
<comment type="subunit">
    <text evidence="1">PSII is composed of 1 copy each of membrane proteins PsbA, PsbB, PsbC, PsbD, PsbE, PsbF, PsbH, PsbI, PsbJ, PsbK, PsbL, PsbM, PsbT, PsbX, PsbY, PsbZ, Psb30/Ycf12, at least 3 peripheral proteins of the oxygen-evolving complex and a large number of cofactors. It forms dimeric complexes.</text>
</comment>
<comment type="subcellular location">
    <subcellularLocation>
        <location evidence="1">Plastid</location>
        <location evidence="1">Chloroplast thylakoid membrane</location>
        <topology evidence="1">Multi-pass membrane protein</topology>
    </subcellularLocation>
</comment>
<comment type="PTM">
    <text evidence="1">Tyr-164 forms a radical intermediate that is referred to as redox-active TyrZ, YZ or Y-Z.</text>
</comment>
<comment type="PTM">
    <text evidence="1">C-terminally processed by CtpA; processing is essential to allow assembly of the oxygen-evolving complex and thus photosynthetic growth.</text>
</comment>
<comment type="miscellaneous">
    <text evidence="1">2 of the reaction center chlorophylls (ChlD1 and ChlD2) are entirely coordinated by water.</text>
</comment>
<comment type="miscellaneous">
    <text evidence="1">Herbicides such as atrazine, BNT, diuron or ioxynil bind in the Q(B) binding site and block subsequent electron transfer.</text>
</comment>
<comment type="similarity">
    <text evidence="1">Belongs to the reaction center PufL/M/PsbA/D family.</text>
</comment>
<evidence type="ECO:0000255" key="1">
    <source>
        <dbReference type="HAMAP-Rule" id="MF_01379"/>
    </source>
</evidence>
<protein>
    <recommendedName>
        <fullName evidence="1">Photosystem II protein D1</fullName>
        <shortName evidence="1">PSII D1 protein</shortName>
        <ecNumber evidence="1">1.10.3.9</ecNumber>
    </recommendedName>
    <alternativeName>
        <fullName evidence="1">Photosystem II Q(B) protein</fullName>
    </alternativeName>
</protein>
<feature type="chain" id="PRO_0000441381" description="Photosystem II protein D1" evidence="1">
    <location>
        <begin position="1"/>
        <end position="347"/>
    </location>
</feature>
<feature type="propeptide" id="PRO_0000316494" evidence="1">
    <location>
        <begin position="348"/>
        <end position="360"/>
    </location>
</feature>
<feature type="transmembrane region" description="Helical" evidence="1">
    <location>
        <begin position="32"/>
        <end position="49"/>
    </location>
</feature>
<feature type="transmembrane region" description="Helical" evidence="1">
    <location>
        <begin position="121"/>
        <end position="136"/>
    </location>
</feature>
<feature type="transmembrane region" description="Helical" evidence="1">
    <location>
        <begin position="145"/>
        <end position="159"/>
    </location>
</feature>
<feature type="transmembrane region" description="Helical" evidence="1">
    <location>
        <begin position="200"/>
        <end position="221"/>
    </location>
</feature>
<feature type="transmembrane region" description="Helical" evidence="1">
    <location>
        <begin position="277"/>
        <end position="291"/>
    </location>
</feature>
<feature type="binding site" description="axial binding residue" evidence="1">
    <location>
        <position position="121"/>
    </location>
    <ligand>
        <name>chlorophyll a</name>
        <dbReference type="ChEBI" id="CHEBI:58416"/>
        <label>ChlzD1</label>
    </ligand>
    <ligandPart>
        <name>Mg</name>
        <dbReference type="ChEBI" id="CHEBI:25107"/>
    </ligandPart>
</feature>
<feature type="binding site" evidence="1">
    <location>
        <position position="129"/>
    </location>
    <ligand>
        <name>pheophytin a</name>
        <dbReference type="ChEBI" id="CHEBI:136840"/>
        <label>D1</label>
    </ligand>
</feature>
<feature type="binding site" evidence="1">
    <location>
        <position position="173"/>
    </location>
    <ligand>
        <name>[CaMn4O5] cluster</name>
        <dbReference type="ChEBI" id="CHEBI:189552"/>
    </ligand>
</feature>
<feature type="binding site" evidence="1">
    <location>
        <position position="192"/>
    </location>
    <ligand>
        <name>[CaMn4O5] cluster</name>
        <dbReference type="ChEBI" id="CHEBI:189552"/>
    </ligand>
</feature>
<feature type="binding site" description="axial binding residue" evidence="1">
    <location>
        <position position="201"/>
    </location>
    <ligand>
        <name>chlorophyll a</name>
        <dbReference type="ChEBI" id="CHEBI:58416"/>
        <label>PD1</label>
    </ligand>
    <ligandPart>
        <name>Mg</name>
        <dbReference type="ChEBI" id="CHEBI:25107"/>
    </ligandPart>
</feature>
<feature type="binding site" evidence="1">
    <location>
        <position position="218"/>
    </location>
    <ligand>
        <name>a quinone</name>
        <dbReference type="ChEBI" id="CHEBI:132124"/>
        <label>B</label>
    </ligand>
</feature>
<feature type="binding site" evidence="1">
    <location>
        <position position="218"/>
    </location>
    <ligand>
        <name>Fe cation</name>
        <dbReference type="ChEBI" id="CHEBI:24875"/>
        <note>ligand shared with heterodimeric partner</note>
    </ligand>
</feature>
<feature type="binding site" evidence="1">
    <location>
        <begin position="267"/>
        <end position="268"/>
    </location>
    <ligand>
        <name>a quinone</name>
        <dbReference type="ChEBI" id="CHEBI:132124"/>
        <label>B</label>
    </ligand>
</feature>
<feature type="binding site" evidence="1">
    <location>
        <position position="275"/>
    </location>
    <ligand>
        <name>Fe cation</name>
        <dbReference type="ChEBI" id="CHEBI:24875"/>
        <note>ligand shared with heterodimeric partner</note>
    </ligand>
</feature>
<feature type="binding site" evidence="1">
    <location>
        <position position="335"/>
    </location>
    <ligand>
        <name>[CaMn4O5] cluster</name>
        <dbReference type="ChEBI" id="CHEBI:189552"/>
    </ligand>
</feature>
<feature type="binding site" evidence="1">
    <location>
        <position position="336"/>
    </location>
    <ligand>
        <name>[CaMn4O5] cluster</name>
        <dbReference type="ChEBI" id="CHEBI:189552"/>
    </ligand>
</feature>
<feature type="binding site" evidence="1">
    <location>
        <position position="345"/>
    </location>
    <ligand>
        <name>[CaMn4O5] cluster</name>
        <dbReference type="ChEBI" id="CHEBI:189552"/>
    </ligand>
</feature>
<feature type="binding site" evidence="1">
    <location>
        <position position="347"/>
    </location>
    <ligand>
        <name>[CaMn4O5] cluster</name>
        <dbReference type="ChEBI" id="CHEBI:189552"/>
    </ligand>
</feature>
<feature type="site" description="Tyrosine radical intermediate" evidence="1">
    <location>
        <position position="164"/>
    </location>
</feature>
<feature type="site" description="Stabilizes free radical intermediate" evidence="1">
    <location>
        <position position="193"/>
    </location>
</feature>
<feature type="site" description="Cleavage; by CtpA" evidence="1">
    <location>
        <begin position="347"/>
        <end position="348"/>
    </location>
</feature>
<organism>
    <name type="scientific">Karenia mikimotoi</name>
    <name type="common">Red tide dinoflagellate</name>
    <name type="synonym">Gymnodinium mikimotoi</name>
    <dbReference type="NCBI Taxonomy" id="225107"/>
    <lineage>
        <taxon>Eukaryota</taxon>
        <taxon>Sar</taxon>
        <taxon>Alveolata</taxon>
        <taxon>Dinophyceae</taxon>
        <taxon>Gymnodiniales</taxon>
        <taxon>Kareniaceae</taxon>
        <taxon>Karenia</taxon>
    </lineage>
</organism>
<geneLocation type="chloroplast"/>
<keyword id="KW-0106">Calcium</keyword>
<keyword id="KW-0148">Chlorophyll</keyword>
<keyword id="KW-0150">Chloroplast</keyword>
<keyword id="KW-0157">Chromophore</keyword>
<keyword id="KW-0249">Electron transport</keyword>
<keyword id="KW-0359">Herbicide resistance</keyword>
<keyword id="KW-0408">Iron</keyword>
<keyword id="KW-0460">Magnesium</keyword>
<keyword id="KW-0464">Manganese</keyword>
<keyword id="KW-0472">Membrane</keyword>
<keyword id="KW-0479">Metal-binding</keyword>
<keyword id="KW-0560">Oxidoreductase</keyword>
<keyword id="KW-0602">Photosynthesis</keyword>
<keyword id="KW-0604">Photosystem II</keyword>
<keyword id="KW-0934">Plastid</keyword>
<keyword id="KW-0793">Thylakoid</keyword>
<keyword id="KW-0812">Transmembrane</keyword>
<keyword id="KW-1133">Transmembrane helix</keyword>
<keyword id="KW-0813">Transport</keyword>
<gene>
    <name evidence="1" type="primary">psbA</name>
</gene>
<sequence>MKSTLLNKKSQQTTPAWEFFCSWVTTTENRLYLGWFGCLMVPTLVSATFAYIIGFLAAPPVDIDGIREPVSGSLLYANNIISGAVIPSSNAMGVHFYPIWEAASLDEWLYNGGTYQLVVFHFFIGVCSYLGREWELSYRLGMRPWIFVAFSAPVAAASAVFIVYPIGQGSFSDGMPLGISGTFNFMLVFQAEHNILMHPLHMFGVAAVFGGSLFSAMHGSLVTSSLLKETAEFESANYGYRFGQSTETYNIVAAHGYFGRLIFQYASFNNSRSLHFFLGAWPVVGIWLTAMGVSTMAFNLNGLNFQQSILDASGCPINTWADILNRANLGMEVMHERNAHNFPLDLACANCLLSLWPMVG</sequence>
<reference key="1">
    <citation type="journal article" date="1999" name="Phycol. Res.">
        <title>Preliminary phylogenetic analysis of plastid-encoded genes from an anomalously pigmented dinoflagellate Gymnodinium mikimotoi (Gymnodiniales, Dinophyta).</title>
        <authorList>
            <person name="Takishita K."/>
            <person name="Nakano K."/>
            <person name="Uchida A."/>
        </authorList>
    </citation>
    <scope>NUCLEOTIDE SEQUENCE [GENOMIC DNA]</scope>
    <source>
        <strain>G303ax-2</strain>
    </source>
</reference>
<proteinExistence type="inferred from homology"/>
<name>PSBA_KARMI</name>
<dbReference type="EC" id="1.10.3.9" evidence="1"/>
<dbReference type="EMBL" id="AB027234">
    <property type="protein sequence ID" value="BAA86296.1"/>
    <property type="molecule type" value="Genomic_DNA"/>
</dbReference>
<dbReference type="SMR" id="Q9TJ82"/>
<dbReference type="GO" id="GO:0009535">
    <property type="term" value="C:chloroplast thylakoid membrane"/>
    <property type="evidence" value="ECO:0007669"/>
    <property type="project" value="UniProtKB-SubCell"/>
</dbReference>
<dbReference type="GO" id="GO:0009523">
    <property type="term" value="C:photosystem II"/>
    <property type="evidence" value="ECO:0007669"/>
    <property type="project" value="UniProtKB-KW"/>
</dbReference>
<dbReference type="GO" id="GO:0016168">
    <property type="term" value="F:chlorophyll binding"/>
    <property type="evidence" value="ECO:0007669"/>
    <property type="project" value="UniProtKB-UniRule"/>
</dbReference>
<dbReference type="GO" id="GO:0045156">
    <property type="term" value="F:electron transporter, transferring electrons within the cyclic electron transport pathway of photosynthesis activity"/>
    <property type="evidence" value="ECO:0007669"/>
    <property type="project" value="InterPro"/>
</dbReference>
<dbReference type="GO" id="GO:0005506">
    <property type="term" value="F:iron ion binding"/>
    <property type="evidence" value="ECO:0007669"/>
    <property type="project" value="UniProtKB-UniRule"/>
</dbReference>
<dbReference type="GO" id="GO:0016682">
    <property type="term" value="F:oxidoreductase activity, acting on diphenols and related substances as donors, oxygen as acceptor"/>
    <property type="evidence" value="ECO:0007669"/>
    <property type="project" value="UniProtKB-UniRule"/>
</dbReference>
<dbReference type="GO" id="GO:0009772">
    <property type="term" value="P:photosynthetic electron transport in photosystem II"/>
    <property type="evidence" value="ECO:0007669"/>
    <property type="project" value="InterPro"/>
</dbReference>
<dbReference type="GO" id="GO:0009635">
    <property type="term" value="P:response to herbicide"/>
    <property type="evidence" value="ECO:0007669"/>
    <property type="project" value="UniProtKB-KW"/>
</dbReference>
<dbReference type="FunFam" id="1.20.85.10:FF:000002">
    <property type="entry name" value="Photosystem II protein D1"/>
    <property type="match status" value="1"/>
</dbReference>
<dbReference type="Gene3D" id="1.20.85.10">
    <property type="entry name" value="Photosystem II protein D1-like"/>
    <property type="match status" value="1"/>
</dbReference>
<dbReference type="HAMAP" id="MF_01379">
    <property type="entry name" value="PSII_PsbA_D1"/>
    <property type="match status" value="1"/>
</dbReference>
<dbReference type="InterPro" id="IPR055266">
    <property type="entry name" value="D1/D2"/>
</dbReference>
<dbReference type="InterPro" id="IPR036854">
    <property type="entry name" value="Photo_II_D1/D2_sf"/>
</dbReference>
<dbReference type="InterPro" id="IPR000484">
    <property type="entry name" value="Photo_RC_L/M"/>
</dbReference>
<dbReference type="InterPro" id="IPR055265">
    <property type="entry name" value="Photo_RC_L/M_CS"/>
</dbReference>
<dbReference type="InterPro" id="IPR005867">
    <property type="entry name" value="PSII_D1"/>
</dbReference>
<dbReference type="NCBIfam" id="TIGR01151">
    <property type="entry name" value="psbA"/>
    <property type="match status" value="1"/>
</dbReference>
<dbReference type="PANTHER" id="PTHR33149:SF12">
    <property type="entry name" value="PHOTOSYSTEM II D2 PROTEIN"/>
    <property type="match status" value="1"/>
</dbReference>
<dbReference type="PANTHER" id="PTHR33149">
    <property type="entry name" value="PHOTOSYSTEM II PROTEIN D1"/>
    <property type="match status" value="1"/>
</dbReference>
<dbReference type="Pfam" id="PF00124">
    <property type="entry name" value="Photo_RC"/>
    <property type="match status" value="1"/>
</dbReference>
<dbReference type="PRINTS" id="PR00256">
    <property type="entry name" value="REACTNCENTRE"/>
</dbReference>
<dbReference type="SUPFAM" id="SSF81483">
    <property type="entry name" value="Bacterial photosystem II reaction centre, L and M subunits"/>
    <property type="match status" value="1"/>
</dbReference>
<dbReference type="PROSITE" id="PS00244">
    <property type="entry name" value="REACTION_CENTER"/>
    <property type="match status" value="1"/>
</dbReference>